<organismHost>
    <name type="scientific">Cavia cutleri</name>
    <name type="common">Guinea pig</name>
    <dbReference type="NCBI Taxonomy" id="10144"/>
</organismHost>
<organismHost>
    <name type="scientific">Homo sapiens</name>
    <name type="common">Human</name>
    <dbReference type="NCBI Taxonomy" id="9606"/>
</organismHost>
<organismHost>
    <name type="scientific">Nephelomys albigularis</name>
    <name type="common">Tomes's rice rat</name>
    <name type="synonym">Oryzomys albigularis</name>
    <dbReference type="NCBI Taxonomy" id="530178"/>
</organismHost>
<dbReference type="EMBL" id="K02734">
    <property type="protein sequence ID" value="AAA46824.1"/>
    <property type="molecule type" value="Genomic_RNA"/>
</dbReference>
<dbReference type="EMBL" id="M16735">
    <property type="protein sequence ID" value="AAA46827.1"/>
    <property type="molecule type" value="Genomic_RNA"/>
</dbReference>
<dbReference type="PIR" id="A04149">
    <property type="entry name" value="QQXPGP"/>
</dbReference>
<dbReference type="SMR" id="P03540"/>
<dbReference type="GlyCosmos" id="P03540">
    <property type="glycosylation" value="15 sites, No reported glycans"/>
</dbReference>
<dbReference type="Proteomes" id="UP000201514">
    <property type="component" value="Genome"/>
</dbReference>
<dbReference type="GO" id="GO:0044167">
    <property type="term" value="C:host cell endoplasmic reticulum membrane"/>
    <property type="evidence" value="ECO:0007669"/>
    <property type="project" value="UniProtKB-SubCell"/>
</dbReference>
<dbReference type="GO" id="GO:0044178">
    <property type="term" value="C:host cell Golgi membrane"/>
    <property type="evidence" value="ECO:0007669"/>
    <property type="project" value="UniProtKB-SubCell"/>
</dbReference>
<dbReference type="GO" id="GO:0020002">
    <property type="term" value="C:host cell plasma membrane"/>
    <property type="evidence" value="ECO:0007669"/>
    <property type="project" value="UniProtKB-SubCell"/>
</dbReference>
<dbReference type="GO" id="GO:0016020">
    <property type="term" value="C:membrane"/>
    <property type="evidence" value="ECO:0007669"/>
    <property type="project" value="UniProtKB-UniRule"/>
</dbReference>
<dbReference type="GO" id="GO:0019031">
    <property type="term" value="C:viral envelope"/>
    <property type="evidence" value="ECO:0007669"/>
    <property type="project" value="UniProtKB-UniRule"/>
</dbReference>
<dbReference type="GO" id="GO:0055036">
    <property type="term" value="C:virion membrane"/>
    <property type="evidence" value="ECO:0007669"/>
    <property type="project" value="UniProtKB-SubCell"/>
</dbReference>
<dbReference type="GO" id="GO:0046872">
    <property type="term" value="F:metal ion binding"/>
    <property type="evidence" value="ECO:0007669"/>
    <property type="project" value="UniProtKB-KW"/>
</dbReference>
<dbReference type="GO" id="GO:0039654">
    <property type="term" value="P:fusion of virus membrane with host endosome membrane"/>
    <property type="evidence" value="ECO:0007669"/>
    <property type="project" value="UniProtKB-UniRule"/>
</dbReference>
<dbReference type="GO" id="GO:0019065">
    <property type="term" value="P:receptor-mediated endocytosis of virus by host cell"/>
    <property type="evidence" value="ECO:0007669"/>
    <property type="project" value="UniProtKB-UniRule"/>
</dbReference>
<dbReference type="GO" id="GO:0019062">
    <property type="term" value="P:virion attachment to host cell"/>
    <property type="evidence" value="ECO:0007669"/>
    <property type="project" value="UniProtKB-UniRule"/>
</dbReference>
<dbReference type="Gene3D" id="6.10.140.1590">
    <property type="match status" value="1"/>
</dbReference>
<dbReference type="Gene3D" id="2.20.28.180">
    <property type="entry name" value="Arenavirus glycoprotein, zinc binding domain"/>
    <property type="match status" value="1"/>
</dbReference>
<dbReference type="HAMAP" id="MF_04084">
    <property type="entry name" value="ARENA_GPC"/>
    <property type="match status" value="1"/>
</dbReference>
<dbReference type="InterPro" id="IPR001535">
    <property type="entry name" value="Arena_glycoprot"/>
</dbReference>
<dbReference type="InterPro" id="IPR043015">
    <property type="entry name" value="Arena_glycoprot_zinc-bd"/>
</dbReference>
<dbReference type="Pfam" id="PF00798">
    <property type="entry name" value="Arena_glycoprot"/>
    <property type="match status" value="1"/>
</dbReference>
<dbReference type="PIRSF" id="PIRSF004028">
    <property type="entry name" value="GPC_ArenaV"/>
    <property type="match status" value="1"/>
</dbReference>
<protein>
    <recommendedName>
        <fullName evidence="2">Pre-glycoprotein polyprotein GP complex</fullName>
        <shortName evidence="2">Pre-GP-C</shortName>
    </recommendedName>
    <component>
        <recommendedName>
            <fullName evidence="2">Stable signal peptide</fullName>
            <shortName evidence="2">SSP</shortName>
        </recommendedName>
    </component>
    <component>
        <recommendedName>
            <fullName evidence="2">Glycoprotein G1</fullName>
            <shortName evidence="2">GP1</shortName>
        </recommendedName>
    </component>
    <component>
        <recommendedName>
            <fullName evidence="2">Glycoprotein G2</fullName>
            <shortName evidence="2">GP2</shortName>
        </recommendedName>
    </component>
</protein>
<sequence>MGQIVTLIQSIPEVLQEVFNVALIIVSVLCIVKGFVNLMRCGLFQLVTFLILSGRSCDSMMIDRRHNLTHVEFNLTRMFDNLPQSCSKNNTHHYYKGPSNTTWGIELTLTNTSIANETSGNFSNIGSLGYGNISNCDRTREAGHTLKWLLNELHFNVLHVTRHIGARCKTVEGAGVLIQYNLTVGDRGGEVGRHLIASLAQIIGDPKIAWVGKCFNNCSGDTCRLTNCEGGTHYNFLIIQNTTWENHCTYTPMATIRMALQRTAYSSVSRKLLGFFTWDLSDSSGQHVPGGYCLEQWAIIWAGIKCFDNTVMAKCNKDHNEEFCDTMRLFDFNQNAIKTLQLNVENSLNLFKKTINGLISDSLVIRNSLKQLAKIPYCNYTKFWYINDTITGRHSLPQCWLVHNGSYLNETHFKNDWLWESQNLYNEMLMKEYEERQGKTPLALTDICFWSLVFYTITVFLHIVGIPTHRHIIGDGCPKPHRITRNSLCSCGYYKYQRNLTNG</sequence>
<proteinExistence type="inferred from homology"/>
<gene>
    <name evidence="2" type="primary">GPC</name>
    <name type="synonym">GP-C</name>
</gene>
<reference key="1">
    <citation type="journal article" date="1984" name="J. Virol.">
        <title>Sequencing studies of pichinde arenavirus S RNA indicate a novel coding strategy, an ambisense viral S RNA.</title>
        <authorList>
            <person name="Auperin D.D."/>
            <person name="Romanowski V."/>
            <person name="Galinski M."/>
            <person name="Bishop D.H.L."/>
        </authorList>
    </citation>
    <scope>NUCLEOTIDE SEQUENCE [GENOMIC RNA]</scope>
</reference>
<reference key="2">
    <citation type="journal article" date="1987" name="Curr. Top. Microbiol. Immunol.">
        <title>Arenavirus gene structure and organization.</title>
        <authorList>
            <person name="Bishop D.H.L."/>
            <person name="Auperin D.D."/>
        </authorList>
    </citation>
    <scope>NUCLEOTIDE SEQUENCE [GENOMIC RNA]</scope>
</reference>
<accession>P03540</accession>
<name>GLYC_PIARV</name>
<evidence type="ECO:0000250" key="1">
    <source>
        <dbReference type="UniProtKB" id="P26313"/>
    </source>
</evidence>
<evidence type="ECO:0000255" key="2">
    <source>
        <dbReference type="HAMAP-Rule" id="MF_04084"/>
    </source>
</evidence>
<feature type="initiator methionine" description="Removed; by host" evidence="2">
    <location>
        <position position="1"/>
    </location>
</feature>
<feature type="chain" id="PRO_0000353862" description="Pre-glycoprotein polyprotein GP complex" evidence="2">
    <location>
        <begin position="2"/>
        <end position="503"/>
    </location>
</feature>
<feature type="chain" id="PRO_0000353863" description="Stable signal peptide" evidence="2">
    <location>
        <begin position="2"/>
        <end position="58"/>
    </location>
</feature>
<feature type="chain" id="PRO_0000036609" description="Glycoprotein G1" evidence="2">
    <location>
        <begin position="59"/>
        <end position="273"/>
    </location>
</feature>
<feature type="chain" id="PRO_0000036610" description="Glycoprotein G2" evidence="2">
    <location>
        <begin position="274"/>
        <end position="503"/>
    </location>
</feature>
<feature type="topological domain" description="Extracellular" evidence="2">
    <location>
        <begin position="2"/>
        <end position="17"/>
    </location>
</feature>
<feature type="transmembrane region" description="Helical" evidence="2">
    <location>
        <begin position="18"/>
        <end position="33"/>
    </location>
</feature>
<feature type="topological domain" description="Cytoplasmic" evidence="2">
    <location>
        <begin position="34"/>
        <end position="58"/>
    </location>
</feature>
<feature type="topological domain" description="Extracellular" evidence="2">
    <location>
        <begin position="59"/>
        <end position="446"/>
    </location>
</feature>
<feature type="transmembrane region" description="Helical" evidence="2">
    <location>
        <begin position="447"/>
        <end position="467"/>
    </location>
</feature>
<feature type="topological domain" description="Cytoplasmic" evidence="2">
    <location>
        <begin position="468"/>
        <end position="503"/>
    </location>
</feature>
<feature type="binding site" evidence="2">
    <location>
        <position position="57"/>
    </location>
    <ligand>
        <name>Zn(2+)</name>
        <dbReference type="ChEBI" id="CHEBI:29105"/>
        <label>1</label>
    </ligand>
</feature>
<feature type="binding site" evidence="2">
    <location>
        <position position="469"/>
    </location>
    <ligand>
        <name>Zn(2+)</name>
        <dbReference type="ChEBI" id="CHEBI:29105"/>
        <label>2</label>
    </ligand>
</feature>
<feature type="binding site" evidence="2">
    <location>
        <position position="471"/>
    </location>
    <ligand>
        <name>Zn(2+)</name>
        <dbReference type="ChEBI" id="CHEBI:29105"/>
        <label>2</label>
    </ligand>
</feature>
<feature type="binding site" evidence="2">
    <location>
        <position position="477"/>
    </location>
    <ligand>
        <name>Zn(2+)</name>
        <dbReference type="ChEBI" id="CHEBI:29105"/>
        <label>2</label>
    </ligand>
</feature>
<feature type="binding site" evidence="2">
    <location>
        <position position="481"/>
    </location>
    <ligand>
        <name>Zn(2+)</name>
        <dbReference type="ChEBI" id="CHEBI:29105"/>
        <label>1</label>
    </ligand>
</feature>
<feature type="binding site" evidence="2">
    <location>
        <position position="489"/>
    </location>
    <ligand>
        <name>Zn(2+)</name>
        <dbReference type="ChEBI" id="CHEBI:29105"/>
        <label>1</label>
    </ligand>
</feature>
<feature type="binding site" evidence="2">
    <location>
        <position position="491"/>
    </location>
    <ligand>
        <name>Zn(2+)</name>
        <dbReference type="ChEBI" id="CHEBI:29105"/>
        <label>1</label>
    </ligand>
</feature>
<feature type="site" description="Important for GP-C-mediated membrane fusion" evidence="1">
    <location>
        <position position="33"/>
    </location>
</feature>
<feature type="site" description="Cleavage; by host signal peptidase" evidence="2">
    <location>
        <begin position="58"/>
        <end position="59"/>
    </location>
</feature>
<feature type="site" description="Cleavage; by host MBTPS1" evidence="2">
    <location>
        <begin position="273"/>
        <end position="274"/>
    </location>
</feature>
<feature type="lipid moiety-binding region" description="N-myristoyl glycine; by host" evidence="2">
    <location>
        <position position="2"/>
    </location>
</feature>
<feature type="glycosylation site" description="N-linked (GlcNAc...) asparagine; by host" evidence="2">
    <location>
        <position position="89"/>
    </location>
</feature>
<feature type="glycosylation site" description="N-linked (GlcNAc...) asparagine; by host" evidence="2">
    <location>
        <position position="111"/>
    </location>
</feature>
<feature type="glycosylation site" description="N-linked (GlcNAc...) asparagine; by host" evidence="2">
    <location>
        <position position="181"/>
    </location>
</feature>
<feature type="glycosylation site" description="N-linked (GlcNAc...) asparagine; by host" evidence="2">
    <location>
        <position position="241"/>
    </location>
</feature>
<feature type="glycosylation site" description="N-linked (GlcNAc...) asparagine; by host" evidence="2">
    <location>
        <position position="379"/>
    </location>
</feature>
<feature type="glycosylation site" description="N-linked (GlcNAc...) asparagine; by host" evidence="2">
    <location>
        <position position="387"/>
    </location>
</feature>
<feature type="glycosylation site" description="N-linked (GlcNAc...) asparagine; by host" evidence="2">
    <location>
        <position position="404"/>
    </location>
</feature>
<feature type="glycosylation site" description="N-linked (GlcNAc...) asparagine; by host" evidence="2">
    <location>
        <position position="409"/>
    </location>
</feature>
<feature type="disulfide bond" evidence="2">
    <location>
        <begin position="86"/>
        <end position="248"/>
    </location>
</feature>
<feature type="disulfide bond" evidence="2">
    <location>
        <begin position="293"/>
        <end position="306"/>
    </location>
</feature>
<feature type="disulfide bond" evidence="2">
    <location>
        <begin position="315"/>
        <end position="324"/>
    </location>
</feature>
<feature type="disulfide bond" evidence="2">
    <location>
        <begin position="378"/>
        <end position="399"/>
    </location>
</feature>
<comment type="function">
    <molecule>Stable signal peptide</molecule>
    <text evidence="2">Functions as a cleaved signal peptide that is retained as the third component of the GP complex (GP-C). Helps to stabilize the spike complex in its native conformation. The SSP is required for efficient glycoprotein expression, post-translational maturation cleavage of G1 and G2, glycoprotein transport to the cell surface plasma membrane, formation of infectious virus particles, and acid pH-dependent glycoprotein-mediated cell fusion.</text>
</comment>
<comment type="function">
    <molecule>Glycoprotein G1</molecule>
    <text evidence="2">Forms the virion spikes together with glycoprotein G2. The glycoprotein spike trimers are connected to the underlying matrix. Interacts with the host receptor leading to virus endocytosis.</text>
</comment>
<comment type="function">
    <molecule>Glycoprotein G2</molecule>
    <text evidence="2">Forms the virion spikes together with glycoprotein G1. The glycoprotein spike trimers are connected to the underlying matrix. Class I viral fusion protein that directs fusion of viral and host endosomal membranes, leading to delivery of the nucleocapsid into the cytoplasm. Membrane fusion is mediated by irreversible conformational changes induced by acidification.</text>
</comment>
<comment type="subunit">
    <molecule>Stable signal peptide</molecule>
    <text evidence="2">Interacts with glycoprotein G2. Part of the GP complex (GP-C) together with glycoprotein G1 and glycoprotein G2. The GP-complex interacts with protein Z, which interacts with ribonucleocapsid; these interactions may induce virion budding.</text>
</comment>
<comment type="subunit">
    <molecule>Glycoprotein G1</molecule>
    <text evidence="2">Homotrimer; disulfide-linked. In pre-fusion state, G1 homotrimers bind G2 homotrimers via ionic interactions. Part of the GP complex (GP-C) together with glycoprotein G2 and the stable signal peptide. The GP-complex interacts with protein Z, which interacts with ribonucleocapsid; these interactions may induce virion budding.</text>
</comment>
<comment type="subunit">
    <molecule>Glycoprotein G2</molecule>
    <text evidence="2">Homotrimer. Interacts with the stable signal peptide. In pre-fusion state, G2 homotrimers bind G1 homotrimers via ionic interactions. Part of the GP complex (GP-C) together with glycoprotein G1 and the stable signal peptide. Acidification in the endosome triggers rearrangements, which ultimately leads to a 6 helix bundle formed by the two heptad repeat domains (HR1 and HR2) in post-fusion state. The GP-complex interacts with protein Z, which interacts with ribonucleocapsid; these interactions may induce virion budding.</text>
</comment>
<comment type="subcellular location">
    <molecule>Stable signal peptide</molecule>
    <subcellularLocation>
        <location evidence="2">Virion membrane</location>
        <topology evidence="2">Single-pass type II membrane protein</topology>
    </subcellularLocation>
    <subcellularLocation>
        <location evidence="2">Host endoplasmic reticulum membrane</location>
        <topology evidence="2">Single-pass type II membrane protein</topology>
    </subcellularLocation>
    <subcellularLocation>
        <location evidence="2">Host Golgi apparatus membrane</location>
        <topology evidence="2">Single-pass type II membrane protein</topology>
    </subcellularLocation>
    <subcellularLocation>
        <location evidence="2">Host cell membrane</location>
        <topology evidence="2">Single-pass type II membrane protein</topology>
    </subcellularLocation>
</comment>
<comment type="subcellular location">
    <molecule>Glycoprotein G1</molecule>
    <subcellularLocation>
        <location evidence="2">Virion membrane</location>
        <topology evidence="2">Peripheral membrane protein</topology>
    </subcellularLocation>
    <subcellularLocation>
        <location evidence="2">Host endoplasmic reticulum membrane</location>
        <topology evidence="2">Peripheral membrane protein</topology>
    </subcellularLocation>
    <subcellularLocation>
        <location evidence="2">Host Golgi apparatus membrane</location>
        <topology evidence="2">Peripheral membrane protein</topology>
    </subcellularLocation>
    <subcellularLocation>
        <location evidence="2">Host cell membrane</location>
        <topology evidence="2">Peripheral membrane protein</topology>
    </subcellularLocation>
</comment>
<comment type="subcellular location">
    <molecule>Glycoprotein G2</molecule>
    <subcellularLocation>
        <location evidence="2">Virion membrane</location>
        <topology evidence="2">Single-pass membrane protein</topology>
    </subcellularLocation>
    <subcellularLocation>
        <location evidence="2">Host endoplasmic reticulum membrane</location>
        <topology evidence="2">Single-pass membrane protein</topology>
    </subcellularLocation>
    <subcellularLocation>
        <location evidence="2">Host Golgi apparatus membrane</location>
        <topology evidence="2">Single-pass membrane protein</topology>
    </subcellularLocation>
    <subcellularLocation>
        <location evidence="2">Host cell membrane</location>
        <topology evidence="2">Single-pass membrane protein</topology>
    </subcellularLocation>
    <text evidence="2">Binding to the stable signal peptide masks endogenous ER localization signals in the cytoplasmic domain of G2 to ensure that only the fully assembled, tripartite GP complex is transported for virion assembly.</text>
</comment>
<comment type="domain">
    <molecule>Stable signal peptide</molecule>
    <text evidence="2">The N-terminus is localized at the extracellular side of the GP-C, with a part embedded in the membrane probably.</text>
</comment>
<comment type="domain">
    <molecule>Glycoprotein G2</molecule>
    <text evidence="2">Contains 1 fusion peptide at the N-terminus, 2 heptad repeats domains HR1 and HR2 and, at the C-terminus, a cytoplasmic domain that plays a role in ER location. Also contains a zinc-binding domain that allows SSP retention in the GPC complex by accepting a cysteine from SSP as the fourth ligand.</text>
</comment>
<comment type="PTM">
    <molecule>Pre-glycoprotein polyprotein GP complex</molecule>
    <text evidence="2">Specific enzymatic cleavages in vivo yield mature proteins. GP-C polyprotein is cleaved in the endoplasmic reticulum by the host protease MBTPS1. Only cleaved glycoprotein is incorporated into virions.</text>
</comment>
<comment type="PTM">
    <molecule>Stable signal peptide</molecule>
    <text evidence="2">The SSP remains stably associated with the GP complex following cleavage by signal peptidase and plays crucial roles in the trafficking of GP through the secretory pathway.</text>
</comment>
<comment type="PTM">
    <molecule>Stable signal peptide</molecule>
    <text evidence="2">Myristoylation is necessary for GP2-mediated fusion activity.</text>
</comment>
<comment type="similarity">
    <text evidence="2">Belongs to the arenaviridae GPC protein family.</text>
</comment>
<organism>
    <name type="scientific">Pichinde mammarenavirus</name>
    <name type="common">PICV</name>
    <name type="synonym">Pichind mammarenavirus</name>
    <dbReference type="NCBI Taxonomy" id="3052300"/>
    <lineage>
        <taxon>Viruses</taxon>
        <taxon>Riboviria</taxon>
        <taxon>Orthornavirae</taxon>
        <taxon>Negarnaviricota</taxon>
        <taxon>Polyploviricotina</taxon>
        <taxon>Ellioviricetes</taxon>
        <taxon>Bunyavirales</taxon>
        <taxon>Arenaviridae</taxon>
        <taxon>Mammarenavirus</taxon>
    </lineage>
</organism>
<keyword id="KW-1015">Disulfide bond</keyword>
<keyword id="KW-1170">Fusion of virus membrane with host endosomal membrane</keyword>
<keyword id="KW-1168">Fusion of virus membrane with host membrane</keyword>
<keyword id="KW-0325">Glycoprotein</keyword>
<keyword id="KW-1032">Host cell membrane</keyword>
<keyword id="KW-1038">Host endoplasmic reticulum</keyword>
<keyword id="KW-1040">Host Golgi apparatus</keyword>
<keyword id="KW-1043">Host membrane</keyword>
<keyword id="KW-0945">Host-virus interaction</keyword>
<keyword id="KW-0449">Lipoprotein</keyword>
<keyword id="KW-0472">Membrane</keyword>
<keyword id="KW-0479">Metal-binding</keyword>
<keyword id="KW-0519">Myristate</keyword>
<keyword id="KW-0812">Transmembrane</keyword>
<keyword id="KW-1133">Transmembrane helix</keyword>
<keyword id="KW-1161">Viral attachment to host cell</keyword>
<keyword id="KW-0261">Viral envelope protein</keyword>
<keyword id="KW-1162">Viral penetration into host cytoplasm</keyword>
<keyword id="KW-0946">Virion</keyword>
<keyword id="KW-1164">Virus endocytosis by host</keyword>
<keyword id="KW-1160">Virus entry into host cell</keyword>
<keyword id="KW-0862">Zinc</keyword>